<keyword id="KW-0963">Cytoplasm</keyword>
<keyword id="KW-0333">Golgi apparatus</keyword>
<keyword id="KW-0446">Lipid-binding</keyword>
<keyword id="KW-0472">Membrane</keyword>
<keyword id="KW-0653">Protein transport</keyword>
<keyword id="KW-1185">Reference proteome</keyword>
<keyword id="KW-0813">Transport</keyword>
<gene>
    <name type="primary">SNX3</name>
    <name type="ORF">FGRRES_08932_M</name>
    <name type="ORF">FGSG_08932</name>
</gene>
<protein>
    <recommendedName>
        <fullName>Sorting nexin-3</fullName>
    </recommendedName>
</protein>
<organism>
    <name type="scientific">Gibberella zeae (strain ATCC MYA-4620 / CBS 123657 / FGSC 9075 / NRRL 31084 / PH-1)</name>
    <name type="common">Wheat head blight fungus</name>
    <name type="synonym">Fusarium graminearum</name>
    <dbReference type="NCBI Taxonomy" id="229533"/>
    <lineage>
        <taxon>Eukaryota</taxon>
        <taxon>Fungi</taxon>
        <taxon>Dikarya</taxon>
        <taxon>Ascomycota</taxon>
        <taxon>Pezizomycotina</taxon>
        <taxon>Sordariomycetes</taxon>
        <taxon>Hypocreomycetidae</taxon>
        <taxon>Hypocreales</taxon>
        <taxon>Nectriaceae</taxon>
        <taxon>Fusarium</taxon>
    </lineage>
</organism>
<proteinExistence type="inferred from homology"/>
<dbReference type="EMBL" id="DS231667">
    <property type="protein sequence ID" value="ESU14338.1"/>
    <property type="status" value="ALT_SEQ"/>
    <property type="molecule type" value="Genomic_DNA"/>
</dbReference>
<dbReference type="EMBL" id="HG970333">
    <property type="protein sequence ID" value="CEF77414.1"/>
    <property type="molecule type" value="Genomic_DNA"/>
</dbReference>
<dbReference type="RefSeq" id="XP_011319763.1">
    <property type="nucleotide sequence ID" value="XM_011321461.1"/>
</dbReference>
<dbReference type="SMR" id="Q4I1H6"/>
<dbReference type="FunCoup" id="Q4I1H6">
    <property type="interactions" value="472"/>
</dbReference>
<dbReference type="STRING" id="229533.Q4I1H6"/>
<dbReference type="GeneID" id="23555910"/>
<dbReference type="KEGG" id="fgr:FGSG_08932"/>
<dbReference type="VEuPathDB" id="FungiDB:FGRAMPH1_01G11223"/>
<dbReference type="HOGENOM" id="CLU_057172_2_2_1"/>
<dbReference type="InParanoid" id="Q4I1H6"/>
<dbReference type="OrthoDB" id="15765at110618"/>
<dbReference type="PHI-base" id="PHI:12143"/>
<dbReference type="Proteomes" id="UP000070720">
    <property type="component" value="Chromosome 2"/>
</dbReference>
<dbReference type="GO" id="GO:0031901">
    <property type="term" value="C:early endosome membrane"/>
    <property type="evidence" value="ECO:0007669"/>
    <property type="project" value="TreeGrafter"/>
</dbReference>
<dbReference type="GO" id="GO:0000139">
    <property type="term" value="C:Golgi membrane"/>
    <property type="evidence" value="ECO:0007669"/>
    <property type="project" value="UniProtKB-SubCell"/>
</dbReference>
<dbReference type="GO" id="GO:0030904">
    <property type="term" value="C:retromer complex"/>
    <property type="evidence" value="ECO:0007669"/>
    <property type="project" value="TreeGrafter"/>
</dbReference>
<dbReference type="GO" id="GO:0032266">
    <property type="term" value="F:phosphatidylinositol-3-phosphate binding"/>
    <property type="evidence" value="ECO:0007669"/>
    <property type="project" value="InterPro"/>
</dbReference>
<dbReference type="GO" id="GO:0032456">
    <property type="term" value="P:endocytic recycling"/>
    <property type="evidence" value="ECO:0007669"/>
    <property type="project" value="TreeGrafter"/>
</dbReference>
<dbReference type="GO" id="GO:0034499">
    <property type="term" value="P:late endosome to Golgi transport"/>
    <property type="evidence" value="ECO:0007669"/>
    <property type="project" value="TreeGrafter"/>
</dbReference>
<dbReference type="GO" id="GO:0015031">
    <property type="term" value="P:protein transport"/>
    <property type="evidence" value="ECO:0007669"/>
    <property type="project" value="UniProtKB-KW"/>
</dbReference>
<dbReference type="CDD" id="cd07295">
    <property type="entry name" value="PX_Grd19"/>
    <property type="match status" value="1"/>
</dbReference>
<dbReference type="FunFam" id="3.30.1520.10:FF:000030">
    <property type="entry name" value="Sorting nexin-3, variant"/>
    <property type="match status" value="1"/>
</dbReference>
<dbReference type="Gene3D" id="3.30.1520.10">
    <property type="entry name" value="Phox-like domain"/>
    <property type="match status" value="1"/>
</dbReference>
<dbReference type="InterPro" id="IPR001683">
    <property type="entry name" value="PX_dom"/>
</dbReference>
<dbReference type="InterPro" id="IPR036871">
    <property type="entry name" value="PX_dom_sf"/>
</dbReference>
<dbReference type="InterPro" id="IPR042138">
    <property type="entry name" value="PX_Grd19_PX"/>
</dbReference>
<dbReference type="InterPro" id="IPR051074">
    <property type="entry name" value="Sorting_Nexin"/>
</dbReference>
<dbReference type="PANTHER" id="PTHR45963">
    <property type="entry name" value="RE52028P"/>
    <property type="match status" value="1"/>
</dbReference>
<dbReference type="PANTHER" id="PTHR45963:SF2">
    <property type="entry name" value="RE52028P"/>
    <property type="match status" value="1"/>
</dbReference>
<dbReference type="Pfam" id="PF00787">
    <property type="entry name" value="PX"/>
    <property type="match status" value="1"/>
</dbReference>
<dbReference type="SMART" id="SM00312">
    <property type="entry name" value="PX"/>
    <property type="match status" value="1"/>
</dbReference>
<dbReference type="SUPFAM" id="SSF64268">
    <property type="entry name" value="PX domain"/>
    <property type="match status" value="1"/>
</dbReference>
<dbReference type="PROSITE" id="PS50195">
    <property type="entry name" value="PX"/>
    <property type="match status" value="1"/>
</dbReference>
<name>SNX3_GIBZE</name>
<evidence type="ECO:0000250" key="1"/>
<evidence type="ECO:0000255" key="2">
    <source>
        <dbReference type="PROSITE-ProRule" id="PRU00147"/>
    </source>
</evidence>
<evidence type="ECO:0000256" key="3">
    <source>
        <dbReference type="SAM" id="MobiDB-lite"/>
    </source>
</evidence>
<evidence type="ECO:0000305" key="4"/>
<reference key="1">
    <citation type="journal article" date="2007" name="Science">
        <title>The Fusarium graminearum genome reveals a link between localized polymorphism and pathogen specialization.</title>
        <authorList>
            <person name="Cuomo C.A."/>
            <person name="Gueldener U."/>
            <person name="Xu J.-R."/>
            <person name="Trail F."/>
            <person name="Turgeon B.G."/>
            <person name="Di Pietro A."/>
            <person name="Walton J.D."/>
            <person name="Ma L.-J."/>
            <person name="Baker S.E."/>
            <person name="Rep M."/>
            <person name="Adam G."/>
            <person name="Antoniw J."/>
            <person name="Baldwin T."/>
            <person name="Calvo S.E."/>
            <person name="Chang Y.-L."/>
            <person name="DeCaprio D."/>
            <person name="Gale L.R."/>
            <person name="Gnerre S."/>
            <person name="Goswami R.S."/>
            <person name="Hammond-Kosack K."/>
            <person name="Harris L.J."/>
            <person name="Hilburn K."/>
            <person name="Kennell J.C."/>
            <person name="Kroken S."/>
            <person name="Magnuson J.K."/>
            <person name="Mannhaupt G."/>
            <person name="Mauceli E.W."/>
            <person name="Mewes H.-W."/>
            <person name="Mitterbauer R."/>
            <person name="Muehlbauer G."/>
            <person name="Muensterkoetter M."/>
            <person name="Nelson D."/>
            <person name="O'Donnell K."/>
            <person name="Ouellet T."/>
            <person name="Qi W."/>
            <person name="Quesneville H."/>
            <person name="Roncero M.I.G."/>
            <person name="Seong K.-Y."/>
            <person name="Tetko I.V."/>
            <person name="Urban M."/>
            <person name="Waalwijk C."/>
            <person name="Ward T.J."/>
            <person name="Yao J."/>
            <person name="Birren B.W."/>
            <person name="Kistler H.C."/>
        </authorList>
    </citation>
    <scope>NUCLEOTIDE SEQUENCE [LARGE SCALE GENOMIC DNA]</scope>
    <source>
        <strain>ATCC MYA-4620 / CBS 123657 / FGSC 9075 / NRRL 31084 / PH-1</strain>
    </source>
</reference>
<reference key="2">
    <citation type="journal article" date="2010" name="Nature">
        <title>Comparative genomics reveals mobile pathogenicity chromosomes in Fusarium.</title>
        <authorList>
            <person name="Ma L.-J."/>
            <person name="van der Does H.C."/>
            <person name="Borkovich K.A."/>
            <person name="Coleman J.J."/>
            <person name="Daboussi M.-J."/>
            <person name="Di Pietro A."/>
            <person name="Dufresne M."/>
            <person name="Freitag M."/>
            <person name="Grabherr M."/>
            <person name="Henrissat B."/>
            <person name="Houterman P.M."/>
            <person name="Kang S."/>
            <person name="Shim W.-B."/>
            <person name="Woloshuk C."/>
            <person name="Xie X."/>
            <person name="Xu J.-R."/>
            <person name="Antoniw J."/>
            <person name="Baker S.E."/>
            <person name="Bluhm B.H."/>
            <person name="Breakspear A."/>
            <person name="Brown D.W."/>
            <person name="Butchko R.A.E."/>
            <person name="Chapman S."/>
            <person name="Coulson R."/>
            <person name="Coutinho P.M."/>
            <person name="Danchin E.G.J."/>
            <person name="Diener A."/>
            <person name="Gale L.R."/>
            <person name="Gardiner D.M."/>
            <person name="Goff S."/>
            <person name="Hammond-Kosack K.E."/>
            <person name="Hilburn K."/>
            <person name="Hua-Van A."/>
            <person name="Jonkers W."/>
            <person name="Kazan K."/>
            <person name="Kodira C.D."/>
            <person name="Koehrsen M."/>
            <person name="Kumar L."/>
            <person name="Lee Y.-H."/>
            <person name="Li L."/>
            <person name="Manners J.M."/>
            <person name="Miranda-Saavedra D."/>
            <person name="Mukherjee M."/>
            <person name="Park G."/>
            <person name="Park J."/>
            <person name="Park S.-Y."/>
            <person name="Proctor R.H."/>
            <person name="Regev A."/>
            <person name="Ruiz-Roldan M.C."/>
            <person name="Sain D."/>
            <person name="Sakthikumar S."/>
            <person name="Sykes S."/>
            <person name="Schwartz D.C."/>
            <person name="Turgeon B.G."/>
            <person name="Wapinski I."/>
            <person name="Yoder O."/>
            <person name="Young S."/>
            <person name="Zeng Q."/>
            <person name="Zhou S."/>
            <person name="Galagan J."/>
            <person name="Cuomo C.A."/>
            <person name="Kistler H.C."/>
            <person name="Rep M."/>
        </authorList>
    </citation>
    <scope>GENOME REANNOTATION</scope>
    <source>
        <strain>ATCC MYA-4620 / CBS 123657 / FGSC 9075 / NRRL 31084 / PH-1</strain>
    </source>
</reference>
<reference key="3">
    <citation type="journal article" date="2015" name="BMC Genomics">
        <title>The completed genome sequence of the pathogenic ascomycete fungus Fusarium graminearum.</title>
        <authorList>
            <person name="King R."/>
            <person name="Urban M."/>
            <person name="Hammond-Kosack M.C.U."/>
            <person name="Hassani-Pak K."/>
            <person name="Hammond-Kosack K.E."/>
        </authorList>
    </citation>
    <scope>NUCLEOTIDE SEQUENCE [LARGE SCALE GENOMIC DNA]</scope>
    <source>
        <strain>ATCC MYA-4620 / CBS 123657 / FGSC 9075 / NRRL 31084 / PH-1</strain>
    </source>
</reference>
<sequence length="163" mass="18885">MASDQDNSGLDAPGSQFHRPILQSMPDTRQQSFDEIYGPPENFLEIEVRNPRTHGMGRHMYTDYEILCRTNIPAFKLRQSSVRRRYSDFEYFRDILERESARVTIPPLPGKVFTNRFSDDVIEGRRAGLEKFLKIVVGHPLLQTGSKVLAAFVQDPNWDRNAW</sequence>
<feature type="chain" id="PRO_0000238587" description="Sorting nexin-3">
    <location>
        <begin position="1"/>
        <end position="163"/>
    </location>
</feature>
<feature type="domain" description="PX" evidence="2">
    <location>
        <begin position="42"/>
        <end position="159"/>
    </location>
</feature>
<feature type="region of interest" description="Disordered" evidence="3">
    <location>
        <begin position="1"/>
        <end position="20"/>
    </location>
</feature>
<feature type="binding site" evidence="1">
    <location>
        <position position="85"/>
    </location>
    <ligand>
        <name>a 1,2-diacyl-sn-glycero-3-phospho-(1D-myo-inositol-3-phosphate)</name>
        <dbReference type="ChEBI" id="CHEBI:58088"/>
    </ligand>
</feature>
<feature type="binding site" evidence="1">
    <location>
        <position position="87"/>
    </location>
    <ligand>
        <name>a 1,2-diacyl-sn-glycero-3-phospho-(1D-myo-inositol-3-phosphate)</name>
        <dbReference type="ChEBI" id="CHEBI:58088"/>
    </ligand>
</feature>
<feature type="binding site" evidence="1">
    <location>
        <position position="111"/>
    </location>
    <ligand>
        <name>a 1,2-diacyl-sn-glycero-3-phospho-(1D-myo-inositol-3-phosphate)</name>
        <dbReference type="ChEBI" id="CHEBI:58088"/>
    </ligand>
</feature>
<feature type="binding site" evidence="1">
    <location>
        <position position="116"/>
    </location>
    <ligand>
        <name>a 1,2-diacyl-sn-glycero-3-phospho-(1D-myo-inositol-3-phosphate)</name>
        <dbReference type="ChEBI" id="CHEBI:58088"/>
    </ligand>
</feature>
<feature type="binding site" evidence="1">
    <location>
        <position position="125"/>
    </location>
    <ligand>
        <name>a 1,2-diacyl-sn-glycero-3-phospho-(1D-myo-inositol-3-phosphate)</name>
        <dbReference type="ChEBI" id="CHEBI:58088"/>
    </ligand>
</feature>
<accession>Q4I1H6</accession>
<accession>A0A098DEM5</accession>
<accession>A0A0E0S1N9</accession>
<accession>V6RIB2</accession>
<comment type="function">
    <text evidence="1">Required for retention of late Golgi membrane proteins. Component of the retrieval machinery that functions by direct interaction with the cytosolic tails of certain TGN membrane proteins during the sorting/budding process at the prevacuolar compartment. Binds phosphatidylinositol 3-phosphate (PtdIns(P3)) (By similarity).</text>
</comment>
<comment type="subcellular location">
    <subcellularLocation>
        <location evidence="1">Cytoplasm</location>
    </subcellularLocation>
    <subcellularLocation>
        <location evidence="4">Golgi apparatus membrane</location>
        <topology evidence="4">Peripheral membrane protein</topology>
        <orientation evidence="4">Cytoplasmic side</orientation>
    </subcellularLocation>
    <subcellularLocation>
        <location evidence="4">Prevacuolar compartment membrane</location>
        <topology evidence="4">Peripheral membrane protein</topology>
        <orientation evidence="4">Cytoplasmic side</orientation>
    </subcellularLocation>
</comment>
<comment type="domain">
    <text evidence="1">The PX domain binds phosphatidylinositol 3-phosphate which is necessary for peripheral membrane localization.</text>
</comment>
<comment type="similarity">
    <text evidence="4">Belongs to the sorting nexin family.</text>
</comment>
<comment type="sequence caution" evidence="4">
    <conflict type="erroneous gene model prediction">
        <sequence resource="EMBL-CDS" id="ESU14338"/>
    </conflict>
</comment>